<name>RRP3_DEBHA</name>
<protein>
    <recommendedName>
        <fullName evidence="5">ATP-dependent rRNA helicase RRP3</fullName>
        <ecNumber evidence="1">3.6.4.13</ecNumber>
    </recommendedName>
</protein>
<evidence type="ECO:0000250" key="1">
    <source>
        <dbReference type="UniProtKB" id="P38712"/>
    </source>
</evidence>
<evidence type="ECO:0000255" key="2">
    <source>
        <dbReference type="PROSITE-ProRule" id="PRU00541"/>
    </source>
</evidence>
<evidence type="ECO:0000255" key="3">
    <source>
        <dbReference type="PROSITE-ProRule" id="PRU00542"/>
    </source>
</evidence>
<evidence type="ECO:0000256" key="4">
    <source>
        <dbReference type="SAM" id="MobiDB-lite"/>
    </source>
</evidence>
<evidence type="ECO:0000305" key="5"/>
<gene>
    <name evidence="1" type="primary">RRP3</name>
    <name type="ordered locus">DEHA2E08052g</name>
</gene>
<reference key="1">
    <citation type="journal article" date="2004" name="Nature">
        <title>Genome evolution in yeasts.</title>
        <authorList>
            <person name="Dujon B."/>
            <person name="Sherman D."/>
            <person name="Fischer G."/>
            <person name="Durrens P."/>
            <person name="Casaregola S."/>
            <person name="Lafontaine I."/>
            <person name="de Montigny J."/>
            <person name="Marck C."/>
            <person name="Neuveglise C."/>
            <person name="Talla E."/>
            <person name="Goffard N."/>
            <person name="Frangeul L."/>
            <person name="Aigle M."/>
            <person name="Anthouard V."/>
            <person name="Babour A."/>
            <person name="Barbe V."/>
            <person name="Barnay S."/>
            <person name="Blanchin S."/>
            <person name="Beckerich J.-M."/>
            <person name="Beyne E."/>
            <person name="Bleykasten C."/>
            <person name="Boisrame A."/>
            <person name="Boyer J."/>
            <person name="Cattolico L."/>
            <person name="Confanioleri F."/>
            <person name="de Daruvar A."/>
            <person name="Despons L."/>
            <person name="Fabre E."/>
            <person name="Fairhead C."/>
            <person name="Ferry-Dumazet H."/>
            <person name="Groppi A."/>
            <person name="Hantraye F."/>
            <person name="Hennequin C."/>
            <person name="Jauniaux N."/>
            <person name="Joyet P."/>
            <person name="Kachouri R."/>
            <person name="Kerrest A."/>
            <person name="Koszul R."/>
            <person name="Lemaire M."/>
            <person name="Lesur I."/>
            <person name="Ma L."/>
            <person name="Muller H."/>
            <person name="Nicaud J.-M."/>
            <person name="Nikolski M."/>
            <person name="Oztas S."/>
            <person name="Ozier-Kalogeropoulos O."/>
            <person name="Pellenz S."/>
            <person name="Potier S."/>
            <person name="Richard G.-F."/>
            <person name="Straub M.-L."/>
            <person name="Suleau A."/>
            <person name="Swennen D."/>
            <person name="Tekaia F."/>
            <person name="Wesolowski-Louvel M."/>
            <person name="Westhof E."/>
            <person name="Wirth B."/>
            <person name="Zeniou-Meyer M."/>
            <person name="Zivanovic Y."/>
            <person name="Bolotin-Fukuhara M."/>
            <person name="Thierry A."/>
            <person name="Bouchier C."/>
            <person name="Caudron B."/>
            <person name="Scarpelli C."/>
            <person name="Gaillardin C."/>
            <person name="Weissenbach J."/>
            <person name="Wincker P."/>
            <person name="Souciet J.-L."/>
        </authorList>
    </citation>
    <scope>NUCLEOTIDE SEQUENCE [LARGE SCALE GENOMIC DNA]</scope>
    <source>
        <strain>ATCC 36239 / CBS 767 / BCRC 21394 / JCM 1990 / NBRC 0083 / IGC 2968</strain>
    </source>
</reference>
<sequence>MSVKVDGMINKKSKTHSKKLDARALAEKIKKNALKQQAQEEPAKEENVAENFDTVVDPTAELKFKSFNELKLIPELLEAIQQMKFTKPTPIQSEAIPHALEGKDIIGLAQTGSGKTAAFAIPILQALWEAQAAYYGLVLAPTRELAYQIKETFDALGSSMGLRSVCIVGGMDMMDQARDLMRKPHILVATPGRIMDHLEHTKGFSLKNLKYLVMDEADRLLDMDFGPALDKILKIIPTQRTTYLFSATMTNKIAKLQRASLHNPVRVAVSNKYQTADNLVQSMMLVSDGYKNTYLIHLLNEFLGKSIIIFTRTCAHSQRTALLARILGFSAVPLHGQLTQAQRLGSLNKFKAGKANILIATDVAARGLDIPSVDIVINYDIPTDSKAYIHRVGRTARAGKSGKSISLITQYDLEMYLRIESVLGKKLPKDPSPSKAVLDTLHVHVDRASAEAIRQTKDFHEKRNPKKNRDDRDREER</sequence>
<organism>
    <name type="scientific">Debaryomyces hansenii (strain ATCC 36239 / CBS 767 / BCRC 21394 / JCM 1990 / NBRC 0083 / IGC 2968)</name>
    <name type="common">Yeast</name>
    <name type="synonym">Torulaspora hansenii</name>
    <dbReference type="NCBI Taxonomy" id="284592"/>
    <lineage>
        <taxon>Eukaryota</taxon>
        <taxon>Fungi</taxon>
        <taxon>Dikarya</taxon>
        <taxon>Ascomycota</taxon>
        <taxon>Saccharomycotina</taxon>
        <taxon>Pichiomycetes</taxon>
        <taxon>Debaryomycetaceae</taxon>
        <taxon>Debaryomyces</taxon>
    </lineage>
</organism>
<keyword id="KW-0067">ATP-binding</keyword>
<keyword id="KW-0347">Helicase</keyword>
<keyword id="KW-0378">Hydrolase</keyword>
<keyword id="KW-0547">Nucleotide-binding</keyword>
<keyword id="KW-0539">Nucleus</keyword>
<keyword id="KW-1185">Reference proteome</keyword>
<keyword id="KW-0690">Ribosome biogenesis</keyword>
<keyword id="KW-0694">RNA-binding</keyword>
<keyword id="KW-0698">rRNA processing</keyword>
<proteinExistence type="inferred from homology"/>
<accession>Q6BQ61</accession>
<dbReference type="EC" id="3.6.4.13" evidence="1"/>
<dbReference type="EMBL" id="CR382137">
    <property type="protein sequence ID" value="CAG87892.2"/>
    <property type="molecule type" value="Genomic_DNA"/>
</dbReference>
<dbReference type="RefSeq" id="XP_459659.2">
    <property type="nucleotide sequence ID" value="XM_459659.2"/>
</dbReference>
<dbReference type="SMR" id="Q6BQ61"/>
<dbReference type="FunCoup" id="Q6BQ61">
    <property type="interactions" value="1198"/>
</dbReference>
<dbReference type="STRING" id="284592.Q6BQ61"/>
<dbReference type="GeneID" id="2902196"/>
<dbReference type="KEGG" id="dha:DEHA2E08052g"/>
<dbReference type="VEuPathDB" id="FungiDB:DEHA2E08052g"/>
<dbReference type="eggNOG" id="KOG0330">
    <property type="taxonomic scope" value="Eukaryota"/>
</dbReference>
<dbReference type="HOGENOM" id="CLU_003041_1_1_1"/>
<dbReference type="InParanoid" id="Q6BQ61"/>
<dbReference type="OMA" id="GIGIKCC"/>
<dbReference type="OrthoDB" id="10261904at2759"/>
<dbReference type="Proteomes" id="UP000000599">
    <property type="component" value="Chromosome E"/>
</dbReference>
<dbReference type="GO" id="GO:0005829">
    <property type="term" value="C:cytosol"/>
    <property type="evidence" value="ECO:0007669"/>
    <property type="project" value="TreeGrafter"/>
</dbReference>
<dbReference type="GO" id="GO:0005730">
    <property type="term" value="C:nucleolus"/>
    <property type="evidence" value="ECO:0007669"/>
    <property type="project" value="EnsemblFungi"/>
</dbReference>
<dbReference type="GO" id="GO:0032040">
    <property type="term" value="C:small-subunit processome"/>
    <property type="evidence" value="ECO:0007669"/>
    <property type="project" value="EnsemblFungi"/>
</dbReference>
<dbReference type="GO" id="GO:0005524">
    <property type="term" value="F:ATP binding"/>
    <property type="evidence" value="ECO:0007669"/>
    <property type="project" value="UniProtKB-KW"/>
</dbReference>
<dbReference type="GO" id="GO:0016887">
    <property type="term" value="F:ATP hydrolysis activity"/>
    <property type="evidence" value="ECO:0007669"/>
    <property type="project" value="RHEA"/>
</dbReference>
<dbReference type="GO" id="GO:0003723">
    <property type="term" value="F:RNA binding"/>
    <property type="evidence" value="ECO:0007669"/>
    <property type="project" value="UniProtKB-KW"/>
</dbReference>
<dbReference type="GO" id="GO:0003724">
    <property type="term" value="F:RNA helicase activity"/>
    <property type="evidence" value="ECO:0007669"/>
    <property type="project" value="UniProtKB-EC"/>
</dbReference>
<dbReference type="GO" id="GO:0000462">
    <property type="term" value="P:maturation of SSU-rRNA from tricistronic rRNA transcript (SSU-rRNA, 5.8S rRNA, LSU-rRNA)"/>
    <property type="evidence" value="ECO:0007669"/>
    <property type="project" value="EnsemblFungi"/>
</dbReference>
<dbReference type="CDD" id="cd17954">
    <property type="entry name" value="DEADc_DDX47"/>
    <property type="match status" value="1"/>
</dbReference>
<dbReference type="CDD" id="cd18787">
    <property type="entry name" value="SF2_C_DEAD"/>
    <property type="match status" value="1"/>
</dbReference>
<dbReference type="Gene3D" id="3.40.50.300">
    <property type="entry name" value="P-loop containing nucleotide triphosphate hydrolases"/>
    <property type="match status" value="2"/>
</dbReference>
<dbReference type="InterPro" id="IPR044765">
    <property type="entry name" value="DDX47/Rrp3_DEADc"/>
</dbReference>
<dbReference type="InterPro" id="IPR011545">
    <property type="entry name" value="DEAD/DEAH_box_helicase_dom"/>
</dbReference>
<dbReference type="InterPro" id="IPR050079">
    <property type="entry name" value="DEAD_box_RNA_helicase"/>
</dbReference>
<dbReference type="InterPro" id="IPR014001">
    <property type="entry name" value="Helicase_ATP-bd"/>
</dbReference>
<dbReference type="InterPro" id="IPR001650">
    <property type="entry name" value="Helicase_C-like"/>
</dbReference>
<dbReference type="InterPro" id="IPR027417">
    <property type="entry name" value="P-loop_NTPase"/>
</dbReference>
<dbReference type="InterPro" id="IPR000629">
    <property type="entry name" value="RNA-helicase_DEAD-box_CS"/>
</dbReference>
<dbReference type="InterPro" id="IPR014014">
    <property type="entry name" value="RNA_helicase_DEAD_Q_motif"/>
</dbReference>
<dbReference type="PANTHER" id="PTHR47959:SF24">
    <property type="entry name" value="ATP-DEPENDENT RNA HELICASE"/>
    <property type="match status" value="1"/>
</dbReference>
<dbReference type="PANTHER" id="PTHR47959">
    <property type="entry name" value="ATP-DEPENDENT RNA HELICASE RHLE-RELATED"/>
    <property type="match status" value="1"/>
</dbReference>
<dbReference type="Pfam" id="PF00270">
    <property type="entry name" value="DEAD"/>
    <property type="match status" value="1"/>
</dbReference>
<dbReference type="Pfam" id="PF00271">
    <property type="entry name" value="Helicase_C"/>
    <property type="match status" value="1"/>
</dbReference>
<dbReference type="SMART" id="SM00487">
    <property type="entry name" value="DEXDc"/>
    <property type="match status" value="1"/>
</dbReference>
<dbReference type="SMART" id="SM00490">
    <property type="entry name" value="HELICc"/>
    <property type="match status" value="1"/>
</dbReference>
<dbReference type="SUPFAM" id="SSF52540">
    <property type="entry name" value="P-loop containing nucleoside triphosphate hydrolases"/>
    <property type="match status" value="1"/>
</dbReference>
<dbReference type="PROSITE" id="PS00039">
    <property type="entry name" value="DEAD_ATP_HELICASE"/>
    <property type="match status" value="1"/>
</dbReference>
<dbReference type="PROSITE" id="PS51192">
    <property type="entry name" value="HELICASE_ATP_BIND_1"/>
    <property type="match status" value="1"/>
</dbReference>
<dbReference type="PROSITE" id="PS51194">
    <property type="entry name" value="HELICASE_CTER"/>
    <property type="match status" value="1"/>
</dbReference>
<dbReference type="PROSITE" id="PS51195">
    <property type="entry name" value="Q_MOTIF"/>
    <property type="match status" value="1"/>
</dbReference>
<comment type="function">
    <text evidence="1">ATP-dependent rRNA helicase required for pre-ribosomal RNA processing. Involved in the maturation of the 35S-pre-rRNA and to its cleavage to mature 18S rRNA.</text>
</comment>
<comment type="catalytic activity">
    <reaction evidence="1">
        <text>ATP + H2O = ADP + phosphate + H(+)</text>
        <dbReference type="Rhea" id="RHEA:13065"/>
        <dbReference type="ChEBI" id="CHEBI:15377"/>
        <dbReference type="ChEBI" id="CHEBI:15378"/>
        <dbReference type="ChEBI" id="CHEBI:30616"/>
        <dbReference type="ChEBI" id="CHEBI:43474"/>
        <dbReference type="ChEBI" id="CHEBI:456216"/>
        <dbReference type="EC" id="3.6.4.13"/>
    </reaction>
</comment>
<comment type="subunit">
    <text evidence="1">Interacts with the SSU processome.</text>
</comment>
<comment type="subcellular location">
    <subcellularLocation>
        <location evidence="5">Nucleus</location>
    </subcellularLocation>
</comment>
<comment type="domain">
    <text evidence="5">The Q motif is unique to and characteristic of the DEAD box family of RNA helicases and controls ATP binding and hydrolysis.</text>
</comment>
<comment type="similarity">
    <text evidence="5">Belongs to the DEAD box helicase family. DDX47/RRP3 subfamily.</text>
</comment>
<feature type="chain" id="PRO_0000232273" description="ATP-dependent rRNA helicase RRP3">
    <location>
        <begin position="1"/>
        <end position="477"/>
    </location>
</feature>
<feature type="domain" description="Helicase ATP-binding" evidence="2">
    <location>
        <begin position="96"/>
        <end position="267"/>
    </location>
</feature>
<feature type="domain" description="Helicase C-terminal" evidence="3">
    <location>
        <begin position="294"/>
        <end position="438"/>
    </location>
</feature>
<feature type="region of interest" description="Disordered" evidence="4">
    <location>
        <begin position="1"/>
        <end position="22"/>
    </location>
</feature>
<feature type="region of interest" description="Disordered" evidence="4">
    <location>
        <begin position="452"/>
        <end position="477"/>
    </location>
</feature>
<feature type="short sequence motif" description="Q motif" evidence="5">
    <location>
        <begin position="65"/>
        <end position="93"/>
    </location>
</feature>
<feature type="short sequence motif" description="DEAD box" evidence="5">
    <location>
        <begin position="215"/>
        <end position="218"/>
    </location>
</feature>
<feature type="binding site" evidence="2">
    <location>
        <begin position="109"/>
        <end position="116"/>
    </location>
    <ligand>
        <name>ATP</name>
        <dbReference type="ChEBI" id="CHEBI:30616"/>
    </ligand>
</feature>